<evidence type="ECO:0000250" key="1">
    <source>
        <dbReference type="UniProtKB" id="P0C248"/>
    </source>
</evidence>
<evidence type="ECO:0000250" key="2">
    <source>
        <dbReference type="UniProtKB" id="P0C250"/>
    </source>
</evidence>
<evidence type="ECO:0000250" key="3">
    <source>
        <dbReference type="UniProtKB" id="P58787"/>
    </source>
</evidence>
<evidence type="ECO:0000250" key="4">
    <source>
        <dbReference type="UniProtKB" id="P62903"/>
    </source>
</evidence>
<evidence type="ECO:0000250" key="5">
    <source>
        <dbReference type="UniProtKB" id="P83047"/>
    </source>
</evidence>
<evidence type="ECO:0000256" key="6">
    <source>
        <dbReference type="SAM" id="MobiDB-lite"/>
    </source>
</evidence>
<evidence type="ECO:0000269" key="7">
    <source>
    </source>
</evidence>
<evidence type="ECO:0000305" key="8"/>
<evidence type="ECO:0000305" key="9">
    <source>
    </source>
</evidence>
<evidence type="ECO:0000305" key="10">
    <source>
    </source>
</evidence>
<proteinExistence type="evidence at protein level"/>
<accession>P0DP16</accession>
<sequence>QVMVQGDGDQPAARNAVPKDDNPGGEAGKFMNVLRRSGCPWEPWCG</sequence>
<comment type="function">
    <text evidence="1 2 4 5">Its target is unknown, but this toxin may modulate voltage-activated calcium channels (Cav) or calcium-dependent potassium channels (KCa).</text>
</comment>
<comment type="subcellular location">
    <subcellularLocation>
        <location evidence="7">Secreted</location>
    </subcellularLocation>
</comment>
<comment type="tissue specificity">
    <text evidence="9">Expressed by the venom duct.</text>
</comment>
<comment type="domain">
    <text evidence="8">The cysteine framework is C-C.</text>
</comment>
<comment type="mass spectrometry"/>
<comment type="miscellaneous">
    <text evidence="3">Exists in two forms, due to cis-trans isomerization at 39-Cys-hydroxyPro-40. The cis conformation is the major form.</text>
</comment>
<comment type="similarity">
    <text evidence="8">Belongs to the O2 superfamily. Contryphan family.</text>
</comment>
<organism>
    <name type="scientific">Conus caracteristicus</name>
    <name type="common">Characteristic cone</name>
    <dbReference type="NCBI Taxonomy" id="89440"/>
    <lineage>
        <taxon>Eukaryota</taxon>
        <taxon>Metazoa</taxon>
        <taxon>Spiralia</taxon>
        <taxon>Lophotrochozoa</taxon>
        <taxon>Mollusca</taxon>
        <taxon>Gastropoda</taxon>
        <taxon>Caenogastropoda</taxon>
        <taxon>Neogastropoda</taxon>
        <taxon>Conoidea</taxon>
        <taxon>Conidae</taxon>
        <taxon>Conus</taxon>
    </lineage>
</organism>
<dbReference type="GO" id="GO:0005576">
    <property type="term" value="C:extracellular region"/>
    <property type="evidence" value="ECO:0007669"/>
    <property type="project" value="UniProtKB-SubCell"/>
</dbReference>
<dbReference type="GO" id="GO:0099106">
    <property type="term" value="F:ion channel regulator activity"/>
    <property type="evidence" value="ECO:0007669"/>
    <property type="project" value="UniProtKB-KW"/>
</dbReference>
<dbReference type="GO" id="GO:0090729">
    <property type="term" value="F:toxin activity"/>
    <property type="evidence" value="ECO:0007669"/>
    <property type="project" value="UniProtKB-KW"/>
</dbReference>
<dbReference type="InterPro" id="IPR011062">
    <property type="entry name" value="Contryphan_CS"/>
</dbReference>
<dbReference type="PROSITE" id="PS60027">
    <property type="entry name" value="CONTRYPHAN"/>
    <property type="match status" value="1"/>
</dbReference>
<name>COWA_CONCB</name>
<feature type="signal peptide" evidence="10">
    <location>
        <begin position="1" status="less than"/>
        <end position="6"/>
    </location>
</feature>
<feature type="propeptide" id="PRO_0000452026" evidence="10">
    <location>
        <begin position="7"/>
        <end position="37"/>
    </location>
</feature>
<feature type="peptide" id="PRO_0000439687" description="Contryphan-C" evidence="7">
    <location>
        <begin position="38"/>
        <end position="45"/>
    </location>
</feature>
<feature type="region of interest" description="Disordered" evidence="6">
    <location>
        <begin position="1"/>
        <end position="29"/>
    </location>
</feature>
<feature type="modified residue" description="4-hydroxyproline" evidence="7">
    <location>
        <position position="40"/>
    </location>
</feature>
<feature type="modified residue" description="D-tryptophan" evidence="7">
    <location>
        <position position="41"/>
    </location>
</feature>
<feature type="modified residue" description="Cysteine amide" evidence="7">
    <location>
        <position position="45"/>
    </location>
</feature>
<feature type="disulfide bond" evidence="7">
    <location>
        <begin position="39"/>
        <end position="45"/>
    </location>
</feature>
<feature type="non-terminal residue" evidence="8">
    <location>
        <position position="1"/>
    </location>
</feature>
<reference key="1">
    <citation type="journal article" date="2019" name="Mar. Drugs">
        <title>High-throughput identification and analysis of novel conotoxins from three vermivorous cone snails by transcriptome sequencing.</title>
        <authorList>
            <person name="Yao G."/>
            <person name="Peng C."/>
            <person name="Zhu Y."/>
            <person name="Fan C."/>
            <person name="Jiang H."/>
            <person name="Chen J."/>
            <person name="Cao Y."/>
            <person name="Shi Q."/>
        </authorList>
    </citation>
    <scope>NUCLEOTIDE SEQUENCE [MRNA]</scope>
    <source>
        <tissue>Venom duct</tissue>
    </source>
</reference>
<reference key="2">
    <citation type="journal article" date="2007" name="Rapid Commun. Mass Spectrom.">
        <title>Rapid mass spectral identification of contryphans. Detection of characteristic peptide ions by fragmentation of intact disulfide-bonded peptides in crude venom.</title>
        <authorList>
            <person name="Thakur S.S."/>
            <person name="Balaram P."/>
        </authorList>
    </citation>
    <scope>PROTEIN SEQUENCE OF 38-45</scope>
    <scope>MASS SPECTROMETRY</scope>
    <scope>SUBCELLULAR LOCATION</scope>
    <scope>HYDROXYLATION AT PRO-40</scope>
    <scope>D-AMINO ACID AT TRP-41</scope>
    <scope>AMIDATION AT CYS-45</scope>
    <source>
        <tissue>Venom</tissue>
    </source>
</reference>
<keyword id="KW-0027">Amidation</keyword>
<keyword id="KW-0208">D-amino acid</keyword>
<keyword id="KW-0903">Direct protein sequencing</keyword>
<keyword id="KW-1015">Disulfide bond</keyword>
<keyword id="KW-0379">Hydroxylation</keyword>
<keyword id="KW-0872">Ion channel impairing toxin</keyword>
<keyword id="KW-0528">Neurotoxin</keyword>
<keyword id="KW-0964">Secreted</keyword>
<keyword id="KW-0732">Signal</keyword>
<keyword id="KW-0800">Toxin</keyword>
<protein>
    <recommendedName>
        <fullName evidence="8">Contryphan-C</fullName>
    </recommendedName>
    <alternativeName>
        <fullName>Ca-75</fullName>
    </alternativeName>
</protein>